<name>H17B6_RAT</name>
<dbReference type="EC" id="1.1.1.105" evidence="2"/>
<dbReference type="EC" id="1.1.1.209" evidence="5"/>
<dbReference type="EC" id="1.1.1.239" evidence="5"/>
<dbReference type="EC" id="1.1.1.53" evidence="5"/>
<dbReference type="EC" id="1.1.1.62" evidence="5"/>
<dbReference type="EMBL" id="U89280">
    <property type="protein sequence ID" value="AAB88253.1"/>
    <property type="status" value="ALT_INIT"/>
    <property type="molecule type" value="mRNA"/>
</dbReference>
<dbReference type="EMBL" id="BC088104">
    <property type="protein sequence ID" value="AAH88104.1"/>
    <property type="status" value="ALT_INIT"/>
    <property type="molecule type" value="mRNA"/>
</dbReference>
<dbReference type="EMBL" id="BC091114">
    <property type="protein sequence ID" value="AAH91114.1"/>
    <property type="status" value="ALT_INIT"/>
    <property type="molecule type" value="mRNA"/>
</dbReference>
<dbReference type="RefSeq" id="NP_775427.1">
    <property type="nucleotide sequence ID" value="NM_173305.1"/>
</dbReference>
<dbReference type="RefSeq" id="XP_017450177.2">
    <property type="nucleotide sequence ID" value="XM_017594688.3"/>
</dbReference>
<dbReference type="SMR" id="O54753"/>
<dbReference type="FunCoup" id="O54753">
    <property type="interactions" value="151"/>
</dbReference>
<dbReference type="STRING" id="10116.ENSRNOP00000003498"/>
<dbReference type="GlyCosmos" id="O54753">
    <property type="glycosylation" value="1 site, No reported glycans"/>
</dbReference>
<dbReference type="GlyGen" id="O54753">
    <property type="glycosylation" value="1 site"/>
</dbReference>
<dbReference type="PhosphoSitePlus" id="O54753"/>
<dbReference type="PaxDb" id="10116-ENSRNOP00000003498"/>
<dbReference type="PeptideAtlas" id="O54753"/>
<dbReference type="GeneID" id="286964"/>
<dbReference type="KEGG" id="rno:286964"/>
<dbReference type="UCSC" id="RGD:708343">
    <property type="organism name" value="rat"/>
</dbReference>
<dbReference type="AGR" id="RGD:708343"/>
<dbReference type="CTD" id="8630"/>
<dbReference type="RGD" id="708343">
    <property type="gene designation" value="Hsd17b6"/>
</dbReference>
<dbReference type="eggNOG" id="KOG1610">
    <property type="taxonomic scope" value="Eukaryota"/>
</dbReference>
<dbReference type="InParanoid" id="O54753"/>
<dbReference type="PhylomeDB" id="O54753"/>
<dbReference type="PRO" id="PR:O54753"/>
<dbReference type="Proteomes" id="UP000002494">
    <property type="component" value="Unplaced"/>
</dbReference>
<dbReference type="GO" id="GO:0005789">
    <property type="term" value="C:endoplasmic reticulum membrane"/>
    <property type="evidence" value="ECO:0007669"/>
    <property type="project" value="UniProtKB-SubCell"/>
</dbReference>
<dbReference type="GO" id="GO:0043231">
    <property type="term" value="C:intracellular membrane-bounded organelle"/>
    <property type="evidence" value="ECO:0000318"/>
    <property type="project" value="GO_Central"/>
</dbReference>
<dbReference type="GO" id="GO:0047024">
    <property type="term" value="F:5-alpha-androstane-3-beta,17-beta-diol dehydrogenase (NADP+) activity"/>
    <property type="evidence" value="ECO:0000250"/>
    <property type="project" value="UniProtKB"/>
</dbReference>
<dbReference type="GO" id="GO:0004745">
    <property type="term" value="F:all-trans-retinol dehydrogenase (NAD+) activity"/>
    <property type="evidence" value="ECO:0000266"/>
    <property type="project" value="RGD"/>
</dbReference>
<dbReference type="GO" id="GO:0047044">
    <property type="term" value="F:androstan-3-alpha,17-beta-diol dehydrogenase (NAD+) activity"/>
    <property type="evidence" value="ECO:0000314"/>
    <property type="project" value="UniProtKB"/>
</dbReference>
<dbReference type="GO" id="GO:0047023">
    <property type="term" value="F:androsterone dehydrogenase [NAD(P)+] activity"/>
    <property type="evidence" value="ECO:0000314"/>
    <property type="project" value="UniProtKB"/>
</dbReference>
<dbReference type="GO" id="GO:0004303">
    <property type="term" value="F:estradiol 17-beta-dehydrogenase [NAD(P)+] activity"/>
    <property type="evidence" value="ECO:0000314"/>
    <property type="project" value="UniProtKB"/>
</dbReference>
<dbReference type="GO" id="GO:0047045">
    <property type="term" value="F:testosterone 17-beta-dehydrogenase (NADP+) activity"/>
    <property type="evidence" value="ECO:0000266"/>
    <property type="project" value="RGD"/>
</dbReference>
<dbReference type="GO" id="GO:0047035">
    <property type="term" value="F:testosterone dehydrogenase (NAD+) activity"/>
    <property type="evidence" value="ECO:0000314"/>
    <property type="project" value="UniProtKB"/>
</dbReference>
<dbReference type="GO" id="GO:0008209">
    <property type="term" value="P:androgen metabolic process"/>
    <property type="evidence" value="ECO:0000304"/>
    <property type="project" value="RGD"/>
</dbReference>
<dbReference type="GO" id="GO:0062175">
    <property type="term" value="P:brexanolone catabolic process"/>
    <property type="evidence" value="ECO:0000250"/>
    <property type="project" value="UniProtKB"/>
</dbReference>
<dbReference type="GO" id="GO:0042572">
    <property type="term" value="P:retinol metabolic process"/>
    <property type="evidence" value="ECO:0000318"/>
    <property type="project" value="GO_Central"/>
</dbReference>
<dbReference type="GO" id="GO:0008202">
    <property type="term" value="P:steroid metabolic process"/>
    <property type="evidence" value="ECO:0000318"/>
    <property type="project" value="GO_Central"/>
</dbReference>
<dbReference type="FunFam" id="3.40.50.720:FF:000074">
    <property type="entry name" value="Retinol dehydrogenase type 1"/>
    <property type="match status" value="1"/>
</dbReference>
<dbReference type="Gene3D" id="3.40.50.720">
    <property type="entry name" value="NAD(P)-binding Rossmann-like Domain"/>
    <property type="match status" value="1"/>
</dbReference>
<dbReference type="InterPro" id="IPR036291">
    <property type="entry name" value="NAD(P)-bd_dom_sf"/>
</dbReference>
<dbReference type="InterPro" id="IPR020904">
    <property type="entry name" value="Sc_DH/Rdtase_CS"/>
</dbReference>
<dbReference type="InterPro" id="IPR002347">
    <property type="entry name" value="SDR_fam"/>
</dbReference>
<dbReference type="PANTHER" id="PTHR43313:SF4">
    <property type="entry name" value="17-BETA-HYDROXYSTEROID DEHYDROGENASE TYPE 6"/>
    <property type="match status" value="1"/>
</dbReference>
<dbReference type="PANTHER" id="PTHR43313">
    <property type="entry name" value="SHORT-CHAIN DEHYDROGENASE/REDUCTASE FAMILY 9C"/>
    <property type="match status" value="1"/>
</dbReference>
<dbReference type="Pfam" id="PF00106">
    <property type="entry name" value="adh_short"/>
    <property type="match status" value="1"/>
</dbReference>
<dbReference type="PRINTS" id="PR00081">
    <property type="entry name" value="GDHRDH"/>
</dbReference>
<dbReference type="PRINTS" id="PR00080">
    <property type="entry name" value="SDRFAMILY"/>
</dbReference>
<dbReference type="SUPFAM" id="SSF51735">
    <property type="entry name" value="NAD(P)-binding Rossmann-fold domains"/>
    <property type="match status" value="1"/>
</dbReference>
<dbReference type="PROSITE" id="PS00061">
    <property type="entry name" value="ADH_SHORT"/>
    <property type="match status" value="1"/>
</dbReference>
<comment type="function">
    <text evidence="2 5">NAD-dependent oxidoreductase with broad substrate specificity that shows both oxidative and reductive activity (in vitro). Has retinol dehydrogenase activity towards all-trans-retinol (in vitro) (By similarity). Has 17-beta-hydroxysteroid dehydrogenase activity towards various steroids (in vitro). Converts 5-alpha-androstan-3-alpha,17-beta-diol to androsterone and estradiol to estrone (in vitro). Has 3-alpha-hydroxysteroid dehydrogenase activity towards androsterone (in vitro).</text>
</comment>
<comment type="catalytic activity">
    <reaction evidence="2">
        <text>all-trans-retinol--[retinol-binding protein] + NAD(+) = all-trans-retinal--[retinol-binding protein] + NADH + H(+)</text>
        <dbReference type="Rhea" id="RHEA:48488"/>
        <dbReference type="Rhea" id="RHEA-COMP:14428"/>
        <dbReference type="Rhea" id="RHEA-COMP:14430"/>
        <dbReference type="ChEBI" id="CHEBI:15378"/>
        <dbReference type="ChEBI" id="CHEBI:17336"/>
        <dbReference type="ChEBI" id="CHEBI:17898"/>
        <dbReference type="ChEBI" id="CHEBI:57540"/>
        <dbReference type="ChEBI" id="CHEBI:57945"/>
        <dbReference type="ChEBI" id="CHEBI:83228"/>
        <dbReference type="EC" id="1.1.1.105"/>
    </reaction>
</comment>
<comment type="catalytic activity">
    <reaction evidence="2">
        <text>all-trans-retinol + NAD(+) = all-trans-retinal + NADH + H(+)</text>
        <dbReference type="Rhea" id="RHEA:21284"/>
        <dbReference type="ChEBI" id="CHEBI:15378"/>
        <dbReference type="ChEBI" id="CHEBI:17336"/>
        <dbReference type="ChEBI" id="CHEBI:17898"/>
        <dbReference type="ChEBI" id="CHEBI:57540"/>
        <dbReference type="ChEBI" id="CHEBI:57945"/>
        <dbReference type="EC" id="1.1.1.105"/>
    </reaction>
    <physiologicalReaction direction="left-to-right" evidence="2">
        <dbReference type="Rhea" id="RHEA:21285"/>
    </physiologicalReaction>
</comment>
<comment type="catalytic activity">
    <reaction evidence="5">
        <text>androsterone + NAD(+) = 5alpha-androstan-3,17-dione + NADH + H(+)</text>
        <dbReference type="Rhea" id="RHEA:20381"/>
        <dbReference type="ChEBI" id="CHEBI:15378"/>
        <dbReference type="ChEBI" id="CHEBI:15994"/>
        <dbReference type="ChEBI" id="CHEBI:16032"/>
        <dbReference type="ChEBI" id="CHEBI:57540"/>
        <dbReference type="ChEBI" id="CHEBI:57945"/>
        <dbReference type="EC" id="1.1.1.209"/>
    </reaction>
    <physiologicalReaction direction="left-to-right" evidence="7">
        <dbReference type="Rhea" id="RHEA:20382"/>
    </physiologicalReaction>
    <physiologicalReaction direction="right-to-left" evidence="7">
        <dbReference type="Rhea" id="RHEA:20383"/>
    </physiologicalReaction>
</comment>
<comment type="catalytic activity">
    <reaction evidence="5">
        <text>testosterone + NAD(+) = androst-4-ene-3,17-dione + NADH + H(+)</text>
        <dbReference type="Rhea" id="RHEA:14929"/>
        <dbReference type="ChEBI" id="CHEBI:15378"/>
        <dbReference type="ChEBI" id="CHEBI:16422"/>
        <dbReference type="ChEBI" id="CHEBI:17347"/>
        <dbReference type="ChEBI" id="CHEBI:57540"/>
        <dbReference type="ChEBI" id="CHEBI:57945"/>
        <dbReference type="EC" id="1.1.1.239"/>
    </reaction>
</comment>
<comment type="catalytic activity">
    <reaction evidence="5">
        <text>5alpha-androstane-3alpha,17beta-diol + NAD(+) = 17beta-hydroxy-5alpha-androstan-3-one + NADH + H(+)</text>
        <dbReference type="Rhea" id="RHEA:42004"/>
        <dbReference type="ChEBI" id="CHEBI:15378"/>
        <dbReference type="ChEBI" id="CHEBI:16330"/>
        <dbReference type="ChEBI" id="CHEBI:36713"/>
        <dbReference type="ChEBI" id="CHEBI:57540"/>
        <dbReference type="ChEBI" id="CHEBI:57945"/>
        <dbReference type="EC" id="1.1.1.53"/>
    </reaction>
    <physiologicalReaction direction="right-to-left" evidence="7">
        <dbReference type="Rhea" id="RHEA:42006"/>
    </physiologicalReaction>
</comment>
<comment type="catalytic activity">
    <reaction evidence="5">
        <text>17beta-estradiol + NAD(+) = estrone + NADH + H(+)</text>
        <dbReference type="Rhea" id="RHEA:24612"/>
        <dbReference type="ChEBI" id="CHEBI:15378"/>
        <dbReference type="ChEBI" id="CHEBI:16469"/>
        <dbReference type="ChEBI" id="CHEBI:17263"/>
        <dbReference type="ChEBI" id="CHEBI:57540"/>
        <dbReference type="ChEBI" id="CHEBI:57945"/>
        <dbReference type="EC" id="1.1.1.62"/>
    </reaction>
</comment>
<comment type="catalytic activity">
    <reaction evidence="5">
        <text>17beta-estradiol + NADP(+) = estrone + NADPH + H(+)</text>
        <dbReference type="Rhea" id="RHEA:24616"/>
        <dbReference type="ChEBI" id="CHEBI:15378"/>
        <dbReference type="ChEBI" id="CHEBI:16469"/>
        <dbReference type="ChEBI" id="CHEBI:17263"/>
        <dbReference type="ChEBI" id="CHEBI:57783"/>
        <dbReference type="ChEBI" id="CHEBI:58349"/>
        <dbReference type="EC" id="1.1.1.62"/>
    </reaction>
</comment>
<comment type="catalytic activity">
    <reaction evidence="2">
        <text>3alpha-hydroxy-5alpha-pregnan-20-one + NAD(+) = 5alpha-pregnane-3,20-dione + NADH + H(+)</text>
        <dbReference type="Rhea" id="RHEA:41980"/>
        <dbReference type="ChEBI" id="CHEBI:15378"/>
        <dbReference type="ChEBI" id="CHEBI:28952"/>
        <dbReference type="ChEBI" id="CHEBI:50169"/>
        <dbReference type="ChEBI" id="CHEBI:57540"/>
        <dbReference type="ChEBI" id="CHEBI:57945"/>
    </reaction>
    <physiologicalReaction direction="left-to-right" evidence="2">
        <dbReference type="Rhea" id="RHEA:41981"/>
    </physiologicalReaction>
</comment>
<comment type="catalytic activity">
    <reaction evidence="2">
        <text>5alpha-androstane-3beta,17beta-diol + NAD(+) = 17beta-hydroxy-5alpha-androstan-3-one + NADH + H(+)</text>
        <dbReference type="Rhea" id="RHEA:42184"/>
        <dbReference type="ChEBI" id="CHEBI:15378"/>
        <dbReference type="ChEBI" id="CHEBI:16330"/>
        <dbReference type="ChEBI" id="CHEBI:18329"/>
        <dbReference type="ChEBI" id="CHEBI:57540"/>
        <dbReference type="ChEBI" id="CHEBI:57945"/>
    </reaction>
    <physiologicalReaction direction="right-to-left" evidence="2">
        <dbReference type="Rhea" id="RHEA:42186"/>
    </physiologicalReaction>
</comment>
<comment type="catalytic activity">
    <reaction evidence="2">
        <text>3beta-hydroxy-5alpha-androstan-17-one + NAD(+) = 5alpha-androstan-3,17-dione + NADH + H(+)</text>
        <dbReference type="Rhea" id="RHEA:42188"/>
        <dbReference type="ChEBI" id="CHEBI:15378"/>
        <dbReference type="ChEBI" id="CHEBI:15994"/>
        <dbReference type="ChEBI" id="CHEBI:57540"/>
        <dbReference type="ChEBI" id="CHEBI:57945"/>
        <dbReference type="ChEBI" id="CHEBI:541975"/>
    </reaction>
    <physiologicalReaction direction="right-to-left" evidence="2">
        <dbReference type="Rhea" id="RHEA:42190"/>
    </physiologicalReaction>
</comment>
<comment type="activity regulation">
    <text evidence="5">Competitively inhibited by 9-cis-retinoic acid and 13-cis-retinoic acid.</text>
</comment>
<comment type="biophysicochemical properties">
    <kinetics>
        <KM evidence="5">0.1 uM for 5-alpha-androstan-3-alpha,17-beta-diol</KM>
        <KM evidence="5">0.2 uM for androsterone</KM>
        <KM evidence="5">0.5 uM for dihydrotestosterone</KM>
        <KM evidence="5">1.1 uM for testosterone</KM>
        <KM evidence="5">0.8 uM for estradiol</KM>
        <KM evidence="5">3 uM for NAD</KM>
        <KM evidence="5">1 mM for NADP</KM>
        <Vmax evidence="5">2.5 nmol/min/mg enzyme for 5-alpha-androstan-3-alpha,17-beta-diol</Vmax>
        <Vmax evidence="5">0.1 nmol/min/mg enzyme for androsterone</Vmax>
        <Vmax evidence="5">0.5 nmol/min/mg enzyme for dihydrotestosterone</Vmax>
        <Vmax evidence="5">1.1 nmol/min/mg enzyme for testosterone</Vmax>
        <Vmax evidence="5">2.1 nmol/min/mg enzyme for estradiol</Vmax>
        <text>Vmax was measured using transfected cell lysates.</text>
    </kinetics>
</comment>
<comment type="subcellular location">
    <subcellularLocation>
        <location evidence="2">Microsome membrane</location>
        <topology evidence="2">Peripheral membrane protein</topology>
        <orientation evidence="2">Lumenal side</orientation>
    </subcellularLocation>
    <subcellularLocation>
        <location evidence="2">Endoplasmic reticulum membrane</location>
        <topology evidence="2">Peripheral membrane protein</topology>
        <orientation evidence="2">Lumenal side</orientation>
    </subcellularLocation>
</comment>
<comment type="tissue specificity">
    <text evidence="5">Detected in prostate, liver and kidney.</text>
</comment>
<comment type="induction">
    <text evidence="5">Up-regulated by testosterone. Levels are very low in castrated male rats.</text>
</comment>
<comment type="similarity">
    <text evidence="6">Belongs to the short-chain dehydrogenases/reductases (SDR) family.</text>
</comment>
<comment type="sequence caution" evidence="6">
    <conflict type="erroneous initiation">
        <sequence resource="EMBL-CDS" id="AAB88253"/>
    </conflict>
</comment>
<comment type="sequence caution" evidence="6">
    <conflict type="erroneous initiation">
        <sequence resource="EMBL-CDS" id="AAH88104"/>
    </conflict>
</comment>
<comment type="sequence caution" evidence="6">
    <conflict type="erroneous initiation">
        <sequence resource="EMBL-CDS" id="AAH91114"/>
    </conflict>
</comment>
<proteinExistence type="evidence at protein level"/>
<gene>
    <name type="primary">Hsd17b6</name>
    <name type="synonym">Hsd17b9</name>
</gene>
<protein>
    <recommendedName>
        <fullName>17-beta-hydroxysteroid dehydrogenase type 6</fullName>
        <shortName>17-beta-HSD 6</shortName>
        <shortName>17-beta-HSD6</shortName>
        <ecNumber evidence="2">1.1.1.105</ecNumber>
        <ecNumber evidence="5">1.1.1.209</ecNumber>
        <ecNumber evidence="5">1.1.1.239</ecNumber>
        <ecNumber evidence="5">1.1.1.53</ecNumber>
        <ecNumber evidence="5">1.1.1.62</ecNumber>
    </recommendedName>
    <alternativeName>
        <fullName>3-alpha-&gt;beta-hydroxysteroid epimerase</fullName>
        <shortName>3-alpha-&gt;beta-HSE</shortName>
    </alternativeName>
    <alternativeName>
        <fullName>Oxidative 3-alpha hydroxysteroid dehydrogenase</fullName>
    </alternativeName>
</protein>
<feature type="signal peptide" evidence="3">
    <location>
        <begin position="1"/>
        <end position="17"/>
    </location>
</feature>
<feature type="chain" id="PRO_0000303213" description="17-beta-hydroxysteroid dehydrogenase type 6">
    <location>
        <begin position="18"/>
        <end position="317"/>
    </location>
</feature>
<feature type="active site" description="Proton acceptor" evidence="4">
    <location>
        <position position="176"/>
    </location>
</feature>
<feature type="binding site" evidence="1">
    <location>
        <begin position="33"/>
        <end position="57"/>
    </location>
    <ligand>
        <name>NAD(+)</name>
        <dbReference type="ChEBI" id="CHEBI:57540"/>
    </ligand>
</feature>
<feature type="binding site" evidence="3">
    <location>
        <position position="164"/>
    </location>
    <ligand>
        <name>substrate</name>
    </ligand>
</feature>
<feature type="glycosylation site" description="N-linked (GlcNAc...) asparagine" evidence="3">
    <location>
        <position position="161"/>
    </location>
</feature>
<feature type="sequence conflict" description="In Ref. 1; AAB88253." evidence="6" ref="1">
    <original>I</original>
    <variation>S</variation>
    <location>
        <position position="219"/>
    </location>
</feature>
<keyword id="KW-0256">Endoplasmic reticulum</keyword>
<keyword id="KW-0325">Glycoprotein</keyword>
<keyword id="KW-0443">Lipid metabolism</keyword>
<keyword id="KW-0472">Membrane</keyword>
<keyword id="KW-0492">Microsome</keyword>
<keyword id="KW-0520">NAD</keyword>
<keyword id="KW-0560">Oxidoreductase</keyword>
<keyword id="KW-1185">Reference proteome</keyword>
<keyword id="KW-0732">Signal</keyword>
<keyword id="KW-0753">Steroid metabolism</keyword>
<organism>
    <name type="scientific">Rattus norvegicus</name>
    <name type="common">Rat</name>
    <dbReference type="NCBI Taxonomy" id="10116"/>
    <lineage>
        <taxon>Eukaryota</taxon>
        <taxon>Metazoa</taxon>
        <taxon>Chordata</taxon>
        <taxon>Craniata</taxon>
        <taxon>Vertebrata</taxon>
        <taxon>Euteleostomi</taxon>
        <taxon>Mammalia</taxon>
        <taxon>Eutheria</taxon>
        <taxon>Euarchontoglires</taxon>
        <taxon>Glires</taxon>
        <taxon>Rodentia</taxon>
        <taxon>Myomorpha</taxon>
        <taxon>Muroidea</taxon>
        <taxon>Muridae</taxon>
        <taxon>Murinae</taxon>
        <taxon>Rattus</taxon>
    </lineage>
</organism>
<evidence type="ECO:0000250" key="1"/>
<evidence type="ECO:0000250" key="2">
    <source>
        <dbReference type="UniProtKB" id="O14756"/>
    </source>
</evidence>
<evidence type="ECO:0000255" key="3"/>
<evidence type="ECO:0000255" key="4">
    <source>
        <dbReference type="PROSITE-ProRule" id="PRU10001"/>
    </source>
</evidence>
<evidence type="ECO:0000269" key="5">
    <source>
    </source>
</evidence>
<evidence type="ECO:0000305" key="6"/>
<evidence type="ECO:0000305" key="7">
    <source>
    </source>
</evidence>
<sequence>MWFYLVTLVGLYYLLRWYRERQVVSHLHDKYVFITGCDSGFGNLLARQLDRRGMRVLAACLTEKGAEELKSKTSDRLETVILDVTNTDSISAATQWVKEHVGDKGLWGLVNNAGVFQAFAYIEWCRPEDCMSIFQVNLIGLAQVTLSMLFLVKKARGRIVNVSSVLGRVALFGGFYSCSKYGVEAFSDVLRREIRDFGVKVSIIEPGSFKTRMTDAELIIEKTKKTWEATPEHIRESYGQQFFDDFCNTTRRELKKCSTNLSLVTDCMEHALTSKYPRTRYSAGWDARLFFIPLSYLPTSLVDCLLAISRRKPAQAV</sequence>
<accession>O54753</accession>
<accession>Q5M8C8</accession>
<reference key="1">
    <citation type="journal article" date="1997" name="J. Biol. Chem.">
        <title>Expression cloning and characterization of oxidative 17beta- and 3alpha-hydroxysteroid dehydrogenases from rat and human prostate.</title>
        <authorList>
            <person name="Biswas M.G."/>
            <person name="Russell D.W."/>
        </authorList>
    </citation>
    <scope>NUCLEOTIDE SEQUENCE [MRNA]</scope>
    <scope>FUNCTION</scope>
    <scope>CATALYTIC ACTIVITY</scope>
    <scope>BIOPHYSICOCHEMICAL PROPERTIES</scope>
    <scope>ACTIVITY REGULATION</scope>
    <scope>INDUCTION</scope>
    <scope>TISSUE SPECIFICITY</scope>
    <source>
        <tissue>Prostate</tissue>
    </source>
</reference>
<reference key="2">
    <citation type="journal article" date="2004" name="Genome Res.">
        <title>The status, quality, and expansion of the NIH full-length cDNA project: the Mammalian Gene Collection (MGC).</title>
        <authorList>
            <consortium name="The MGC Project Team"/>
        </authorList>
    </citation>
    <scope>NUCLEOTIDE SEQUENCE [LARGE SCALE MRNA]</scope>
    <source>
        <tissue>Liver</tissue>
    </source>
</reference>